<sequence>MGWSTAWCSVLALWLLWCAVCSNAASGDGNAFPFDIEGSAVVGRQDPSETSDSGVTLGRLPPAAERCDAGFFRTLSGECAPCDCNGNSHECLDGSGFCLHCQRNTTGEHCEKCLDGYIGDSIRGTPRFCQPCPCPLPHLANFAESCYRKNGAVRCICKENYVGPNCERCAPGYYGNPLLIGSTCKKCDCSGNSDPNLIFEDCDEITGQCRNCLRNTTGFKCERCAPGYYGDARTAKNCAVCNCGGGPCDSVTGECLEEGFEVPTGCDKCVWDLTDDLRLAALSIEESKSGLLSVSSGAAAHRHVTDMNSTIHLLRTRLSERENQYTLRKIQINNSENTLRSLLPDVEGLHEKGSQASRKGMLVEKESMDTIDQATHLVEQAHNMRDKIQEINSKMLYYGENQELGPEEIAEKLVLAQKMLEEIRSRQPFLTHRELVDEEADEAQELLSQAENWQRLHNDTRSLFPVVLEQLDDYNAKLSDLQESINQALDHVRDAEDMNRAITFKQRDHEKQHERVKEQMEVVGASLSMSADSLTIPQLTLEELDEIIKNASGIYAEIDGAKNELQGKLSNLSNLSHDLVQEATDHAYNLQQEADELSRNLHSSDMNGLVQKALDASNVYENIANYVSEANETAELALNITDRIYDAVSGIDTQIIYHKDESDNLLNQARELQAKADSSNDEAVADTSRRVGGALWRKGALRDRLNDAVKQLQAAERGDAHQRLGQSKLFIEEANKTTAAVQQVTTPMANNLSNWSQNLQTFDSSAYNTAVDSARDAVRNLTEVVPQLLDQLRTVEQKRPASNISASIQRIRELIAQTRSVASKIQVSMMFDGQSAVEVHPKVSVDDLKAFTSISLYMKPPPKPAEPTGAWVADQFVLYLGSKNAKKEYMGLAIKNDNLVYVYNLGMKDVEILLDSKPVSSWPAYFSIVKIERVGKHGKVFLTVPSLSSTAEEKFIKKGEFAGDDSLLDLTPEDTVFYVGGVPANFKLPASLNLPSYSGCLELATLNNDVISLYNFKHIYNMDPSKSVPCARDKLAFTQSRAASYFFDGSSYAVVRDITRRGKFGQVTRFDIEIRTPADNGLVLLMVNGSMFFSLEMRNGYLHVFYDFGFSNGPVHLEDTLKKAQINDAKYHEISIIYHNDKKMILVVDRRHVKSTDNEKKKIPFTDIYIGGAPQEVLQSRTLRAHLPLDINFRGCMKGFQFQKKDFNLLEQTETLGVGYGCPEDSLISRRAYFNGQSFIASIQKISFFDGFEGGFNFRTLQPNGLLFYYTSGSDVFSISLDNGTVVMDVKGIKVMSTDKQYHDGLPHFVVTSISDTRYELVVDKSRLRGKNPTKGKAEQTQTTEKKFYFGGSPISPQYANFTGCISNAYFTRLDRDVEVEDFQRYSEKVHTSLYECPIESSPLFLLHKKGKNSSKPKTNKQGEKSKDAPSWDPIGLKFLEQKAPRDSHCHLSSSPRAIEHAYQYGGTANSRQEFEHEQGDFGEKSQFAIRLKTRSSHGMIFYVSDQEENDFMTLFLAHGRLVFMFNVGHKKLKIRSQEKYNDGLWHDVIFIREKSSGRLVIDGLRVLEERLPPSGAAWKIKGPIYLGGVAPGRAVKNVQITSVYSFSGCLGNLQLNGASITSASQTFSVTPCFEGPMETGTYFSTEGGYVVLDESFNIGLKFEIAFEVRPRSSSGTLVHGHSVNGEYLNVHMRNGQVIVKVNNGVRDFSTSVTPKQNLCDGRWHRITVIRDSNVVQLDVDSEVNHVVGPLNPKPVDHREPVFVGGVPESLLTPRLAPSKPFTGCIRHFVIDSRPVSFSKAALVSGAVSINSCPTA</sequence>
<evidence type="ECO:0000250" key="1"/>
<evidence type="ECO:0000250" key="2">
    <source>
        <dbReference type="UniProtKB" id="Q16363"/>
    </source>
</evidence>
<evidence type="ECO:0000255" key="3"/>
<evidence type="ECO:0000255" key="4">
    <source>
        <dbReference type="PROSITE-ProRule" id="PRU00122"/>
    </source>
</evidence>
<evidence type="ECO:0000255" key="5">
    <source>
        <dbReference type="PROSITE-ProRule" id="PRU00460"/>
    </source>
</evidence>
<evidence type="ECO:0000256" key="6">
    <source>
        <dbReference type="SAM" id="MobiDB-lite"/>
    </source>
</evidence>
<evidence type="ECO:0000305" key="7"/>
<accession>P97927</accession>
<accession>O88785</accession>
<accession>P70409</accession>
<accession>Q14BF2</accession>
<keyword id="KW-0084">Basement membrane</keyword>
<keyword id="KW-0130">Cell adhesion</keyword>
<keyword id="KW-0175">Coiled coil</keyword>
<keyword id="KW-0903">Direct protein sequencing</keyword>
<keyword id="KW-1015">Disulfide bond</keyword>
<keyword id="KW-0272">Extracellular matrix</keyword>
<keyword id="KW-0325">Glycoprotein</keyword>
<keyword id="KW-0424">Laminin EGF-like domain</keyword>
<keyword id="KW-0654">Proteoglycan</keyword>
<keyword id="KW-1185">Reference proteome</keyword>
<keyword id="KW-0677">Repeat</keyword>
<keyword id="KW-0964">Secreted</keyword>
<keyword id="KW-0732">Signal</keyword>
<feature type="signal peptide" evidence="3">
    <location>
        <begin position="1"/>
        <end position="24"/>
    </location>
</feature>
<feature type="chain" id="PRO_0000017061" description="Laminin subunit alpha-4">
    <location>
        <begin position="25"/>
        <end position="1816"/>
    </location>
</feature>
<feature type="domain" description="Laminin EGF-like 1" evidence="5">
    <location>
        <begin position="82"/>
        <end position="131"/>
    </location>
</feature>
<feature type="domain" description="Laminin EGF-like 2" evidence="5">
    <location>
        <begin position="132"/>
        <end position="186"/>
    </location>
</feature>
<feature type="domain" description="Laminin EGF-like 3" evidence="5">
    <location>
        <begin position="187"/>
        <end position="240"/>
    </location>
</feature>
<feature type="domain" description="Laminin EGF-like 4; truncated" evidence="5">
    <location>
        <begin position="241"/>
        <end position="255"/>
    </location>
</feature>
<feature type="domain" description="Laminin G-like 1" evidence="4">
    <location>
        <begin position="826"/>
        <end position="1030"/>
    </location>
</feature>
<feature type="domain" description="Laminin G-like 2" evidence="4">
    <location>
        <begin position="1042"/>
        <end position="1222"/>
    </location>
</feature>
<feature type="domain" description="Laminin G-like 3" evidence="4">
    <location>
        <begin position="1229"/>
        <end position="1397"/>
    </location>
</feature>
<feature type="domain" description="Laminin G-like 4" evidence="4">
    <location>
        <begin position="1462"/>
        <end position="1633"/>
    </location>
</feature>
<feature type="domain" description="Laminin G-like 5" evidence="4">
    <location>
        <begin position="1640"/>
        <end position="1813"/>
    </location>
</feature>
<feature type="region of interest" description="Domain II and I">
    <location>
        <begin position="256"/>
        <end position="825"/>
    </location>
</feature>
<feature type="region of interest" description="Disordered" evidence="6">
    <location>
        <begin position="1409"/>
        <end position="1433"/>
    </location>
</feature>
<feature type="coiled-coil region" evidence="3">
    <location>
        <begin position="431"/>
        <end position="523"/>
    </location>
</feature>
<feature type="coiled-coil region" evidence="3">
    <location>
        <begin position="556"/>
        <end position="604"/>
    </location>
</feature>
<feature type="coiled-coil region" evidence="3">
    <location>
        <begin position="655"/>
        <end position="717"/>
    </location>
</feature>
<feature type="coiled-coil region" evidence="3">
    <location>
        <begin position="770"/>
        <end position="799"/>
    </location>
</feature>
<feature type="short sequence motif" description="Cell attachment site" evidence="3">
    <location>
        <begin position="717"/>
        <end position="719"/>
    </location>
</feature>
<feature type="compositionally biased region" description="Basic residues" evidence="6">
    <location>
        <begin position="1409"/>
        <end position="1419"/>
    </location>
</feature>
<feature type="compositionally biased region" description="Basic and acidic residues" evidence="6">
    <location>
        <begin position="1421"/>
        <end position="1430"/>
    </location>
</feature>
<feature type="glycosylation site" description="O-linked (Xyl...) (chondroitin sulfate) serine" evidence="2">
    <location>
        <position position="39"/>
    </location>
</feature>
<feature type="glycosylation site" description="N-linked (GlcNAc...) asparagine" evidence="3">
    <location>
        <position position="104"/>
    </location>
</feature>
<feature type="glycosylation site" description="N-linked (GlcNAc...) asparagine" evidence="3">
    <location>
        <position position="215"/>
    </location>
</feature>
<feature type="glycosylation site" description="N-linked (GlcNAc...) asparagine" evidence="3">
    <location>
        <position position="308"/>
    </location>
</feature>
<feature type="glycosylation site" description="N-linked (GlcNAc...) asparagine" evidence="3">
    <location>
        <position position="333"/>
    </location>
</feature>
<feature type="glycosylation site" description="N-linked (GlcNAc...) asparagine" evidence="3">
    <location>
        <position position="458"/>
    </location>
</feature>
<feature type="glycosylation site" description="N-linked (GlcNAc...) asparagine" evidence="3">
    <location>
        <position position="550"/>
    </location>
</feature>
<feature type="glycosylation site" description="N-linked (GlcNAc...) asparagine" evidence="3">
    <location>
        <position position="571"/>
    </location>
</feature>
<feature type="glycosylation site" description="N-linked (GlcNAc...) asparagine" evidence="3">
    <location>
        <position position="574"/>
    </location>
</feature>
<feature type="glycosylation site" description="N-linked (GlcNAc...) asparagine" evidence="3">
    <location>
        <position position="631"/>
    </location>
</feature>
<feature type="glycosylation site" description="N-linked (GlcNAc...) asparagine" evidence="3">
    <location>
        <position position="639"/>
    </location>
</feature>
<feature type="glycosylation site" description="N-linked (GlcNAc...) asparagine" evidence="3">
    <location>
        <position position="735"/>
    </location>
</feature>
<feature type="glycosylation site" description="N-linked (GlcNAc...) asparagine" evidence="3">
    <location>
        <position position="751"/>
    </location>
</feature>
<feature type="glycosylation site" description="N-linked (GlcNAc...) asparagine" evidence="3">
    <location>
        <position position="754"/>
    </location>
</feature>
<feature type="glycosylation site" description="N-linked (GlcNAc...) asparagine" evidence="3">
    <location>
        <position position="780"/>
    </location>
</feature>
<feature type="glycosylation site" description="N-linked (GlcNAc...) asparagine" evidence="3">
    <location>
        <position position="803"/>
    </location>
</feature>
<feature type="glycosylation site" description="N-linked (GlcNAc...) asparagine" evidence="3">
    <location>
        <position position="1088"/>
    </location>
</feature>
<feature type="glycosylation site" description="N-linked (GlcNAc...) asparagine" evidence="3">
    <location>
        <position position="1283"/>
    </location>
</feature>
<feature type="glycosylation site" description="N-linked (GlcNAc...) asparagine" evidence="3">
    <location>
        <position position="1361"/>
    </location>
</feature>
<feature type="disulfide bond" evidence="1">
    <location>
        <begin position="82"/>
        <end position="91"/>
    </location>
</feature>
<feature type="disulfide bond" evidence="1">
    <location>
        <begin position="84"/>
        <end position="98"/>
    </location>
</feature>
<feature type="disulfide bond" evidence="1">
    <location>
        <begin position="101"/>
        <end position="110"/>
    </location>
</feature>
<feature type="disulfide bond" evidence="1">
    <location>
        <begin position="113"/>
        <end position="129"/>
    </location>
</feature>
<feature type="disulfide bond" evidence="1">
    <location>
        <begin position="132"/>
        <end position="146"/>
    </location>
</feature>
<feature type="disulfide bond" evidence="1">
    <location>
        <begin position="134"/>
        <end position="155"/>
    </location>
</feature>
<feature type="disulfide bond" evidence="1">
    <location>
        <begin position="157"/>
        <end position="166"/>
    </location>
</feature>
<feature type="disulfide bond" evidence="1">
    <location>
        <begin position="169"/>
        <end position="184"/>
    </location>
</feature>
<feature type="disulfide bond" evidence="1">
    <location>
        <begin position="187"/>
        <end position="202"/>
    </location>
</feature>
<feature type="disulfide bond" evidence="1">
    <location>
        <begin position="189"/>
        <end position="209"/>
    </location>
</feature>
<feature type="disulfide bond" evidence="1">
    <location>
        <begin position="212"/>
        <end position="221"/>
    </location>
</feature>
<feature type="disulfide bond" evidence="1">
    <location>
        <begin position="224"/>
        <end position="238"/>
    </location>
</feature>
<feature type="disulfide bond" description="Interchain" evidence="7">
    <location>
        <position position="266"/>
    </location>
</feature>
<feature type="disulfide bond" description="Interchain" evidence="7">
    <location>
        <position position="269"/>
    </location>
</feature>
<feature type="disulfide bond" evidence="1">
    <location>
        <begin position="1000"/>
        <end position="1030"/>
    </location>
</feature>
<feature type="disulfide bond" evidence="1">
    <location>
        <begin position="1196"/>
        <end position="1222"/>
    </location>
</feature>
<feature type="disulfide bond" evidence="1">
    <location>
        <begin position="1365"/>
        <end position="1397"/>
    </location>
</feature>
<feature type="disulfide bond" evidence="1">
    <location>
        <begin position="1610"/>
        <end position="1633"/>
    </location>
</feature>
<feature type="disulfide bond" evidence="1">
    <location>
        <begin position="1785"/>
        <end position="1813"/>
    </location>
</feature>
<feature type="sequence conflict" description="In Ref. 2; AAC52982." evidence="7" ref="2">
    <original>C</original>
    <variation>S</variation>
    <location>
        <position position="8"/>
    </location>
</feature>
<feature type="sequence conflict" description="In Ref. 2." evidence="7" ref="2">
    <original>C</original>
    <variation>Y</variation>
    <location>
        <position position="18"/>
    </location>
</feature>
<feature type="sequence conflict" description="In Ref. 3; AAC24725." evidence="7" ref="3">
    <original>C</original>
    <variation>R</variation>
    <location>
        <position position="248"/>
    </location>
</feature>
<feature type="sequence conflict" description="In Ref. 3; AAC24725." evidence="7" ref="3">
    <original>G</original>
    <variation>A</variation>
    <location>
        <position position="297"/>
    </location>
</feature>
<feature type="sequence conflict" description="In Ref. 2; AAC52982." evidence="7" ref="2">
    <original>THR</original>
    <variation>HPS</variation>
    <location>
        <begin position="431"/>
        <end position="433"/>
    </location>
</feature>
<feature type="sequence conflict" description="In Ref. 3; AAC24725." evidence="7" ref="3">
    <original>S</original>
    <variation>C</variation>
    <location>
        <position position="679"/>
    </location>
</feature>
<feature type="sequence conflict" description="In Ref. 2; AAC52982." evidence="7" ref="2">
    <original>D</original>
    <variation>G</variation>
    <location>
        <position position="703"/>
    </location>
</feature>
<feature type="sequence conflict" description="In Ref. 2; AAC52982." evidence="7" ref="2">
    <original>N</original>
    <variation>H</variation>
    <location>
        <position position="706"/>
    </location>
</feature>
<feature type="sequence conflict" description="In Ref. 2." evidence="7" ref="2">
    <original>K</original>
    <variation>R</variation>
    <location>
        <position position="728"/>
    </location>
</feature>
<feature type="sequence conflict" description="In Ref. 2." evidence="7" ref="2">
    <original>F</original>
    <variation>I</variation>
    <location>
        <position position="730"/>
    </location>
</feature>
<feature type="sequence conflict" description="In Ref. 1; AA sequence." evidence="7" ref="1">
    <original>R</original>
    <variation>G</variation>
    <location>
        <position position="779"/>
    </location>
</feature>
<feature type="sequence conflict" description="In Ref. 3; AAC24725." evidence="7" ref="3">
    <original>R</original>
    <variation>S</variation>
    <location>
        <position position="810"/>
    </location>
</feature>
<feature type="sequence conflict" description="In Ref. 2; AAC52982." evidence="7" ref="2">
    <original>AEP</original>
    <variation>QT</variation>
    <location>
        <begin position="865"/>
        <end position="867"/>
    </location>
</feature>
<feature type="sequence conflict" description="In Ref. 3; AAC24725." evidence="7" ref="3">
    <original>K</original>
    <variation>E</variation>
    <location>
        <position position="936"/>
    </location>
</feature>
<feature type="sequence conflict" description="In Ref. 3; AAC24725." evidence="7" ref="3">
    <original>L</original>
    <variation>V</variation>
    <location>
        <position position="970"/>
    </location>
</feature>
<feature type="sequence conflict" description="In Ref. 2; AAC52982." evidence="7" ref="2">
    <original>H</original>
    <variation>R</variation>
    <location>
        <position position="1132"/>
    </location>
</feature>
<feature type="sequence conflict" description="In Ref. 2; AAC52982." evidence="7" ref="2">
    <original>F</original>
    <variation>I</variation>
    <location>
        <position position="1200"/>
    </location>
</feature>
<feature type="sequence conflict" description="In Ref. 2; AAC52982." evidence="7" ref="2">
    <original>D</original>
    <variation>A</variation>
    <location>
        <position position="1382"/>
    </location>
</feature>
<feature type="sequence conflict" description="In Ref. 1; CAA70970." evidence="7" ref="1">
    <original>NS</original>
    <variation>EF</variation>
    <location>
        <begin position="1413"/>
        <end position="1414"/>
    </location>
</feature>
<feature type="sequence conflict" description="In Ref. 2; AAC52982." evidence="7" ref="2">
    <original>A</original>
    <variation>S</variation>
    <location>
        <position position="1489"/>
    </location>
</feature>
<proteinExistence type="evidence at protein level"/>
<comment type="function">
    <text>Binding to cells via a high affinity receptor, laminin is thought to mediate the attachment, migration and organization of cells into tissues during embryonic development by interacting with other extracellular matrix components.</text>
</comment>
<comment type="subunit">
    <text>Laminin is a complex glycoprotein, consisting of three different polypeptide chains (alpha, beta, gamma), which are bound to each other by disulfide bonds into a cross-shaped molecule comprising one long and three short arms with globules at each end. Alpha-4 is a subunit of laminin-8 (laminin-411), laminin-9 (laminin-421) and laminin-14 (laminin-423).</text>
</comment>
<comment type="subcellular location">
    <subcellularLocation>
        <location>Secreted</location>
        <location>Extracellular space</location>
        <location>Extracellular matrix</location>
        <location>Basement membrane</location>
    </subcellularLocation>
    <subcellularLocation>
        <location evidence="2">Secreted</location>
    </subcellularLocation>
    <text>Major basement membrane component.</text>
</comment>
<comment type="tissue specificity">
    <text>Strongly expressed in peripheral nerves, cardiac muscle, fat, dermis, lung stroma, aortic endothelium, endocardium and endothelium of blood vessels in skin and brain.</text>
</comment>
<comment type="domain">
    <text>The alpha-helical domains I and II are thought to interact with other laminin chains to form a coiled coil structure.</text>
</comment>
<comment type="domain">
    <text>Domain G is globular.</text>
</comment>
<protein>
    <recommendedName>
        <fullName>Laminin subunit alpha-4</fullName>
    </recommendedName>
    <alternativeName>
        <fullName>Laminin-14 subunit alpha</fullName>
    </alternativeName>
    <alternativeName>
        <fullName>Laminin-8 subunit alpha</fullName>
    </alternativeName>
    <alternativeName>
        <fullName>Laminin-9 subunit alpha</fullName>
    </alternativeName>
</protein>
<dbReference type="EMBL" id="U58950">
    <property type="protein sequence ID" value="AAB41840.1"/>
    <property type="molecule type" value="mRNA"/>
</dbReference>
<dbReference type="EMBL" id="Y09827">
    <property type="protein sequence ID" value="CAA70970.1"/>
    <property type="molecule type" value="mRNA"/>
</dbReference>
<dbReference type="EMBL" id="U59865">
    <property type="protein sequence ID" value="AAC24725.1"/>
    <property type="molecule type" value="mRNA"/>
</dbReference>
<dbReference type="EMBL" id="BC115942">
    <property type="protein sequence ID" value="AAI15943.1"/>
    <property type="molecule type" value="mRNA"/>
</dbReference>
<dbReference type="EMBL" id="U88352">
    <property type="protein sequence ID" value="AAC53178.1"/>
    <property type="molecule type" value="mRNA"/>
</dbReference>
<dbReference type="EMBL" id="U69176">
    <property type="protein sequence ID" value="AAC52982.1"/>
    <property type="molecule type" value="mRNA"/>
</dbReference>
<dbReference type="CCDS" id="CCDS35882.1"/>
<dbReference type="RefSeq" id="NP_034811.2">
    <property type="nucleotide sequence ID" value="NM_010681.4"/>
</dbReference>
<dbReference type="SMR" id="P97927"/>
<dbReference type="BioGRID" id="201099">
    <property type="interactions" value="1"/>
</dbReference>
<dbReference type="ComplexPortal" id="CPX-3015">
    <property type="entry name" value="Laminin-411 complex"/>
</dbReference>
<dbReference type="ComplexPortal" id="CPX-3019">
    <property type="entry name" value="Laminin-423 complex"/>
</dbReference>
<dbReference type="ComplexPortal" id="CPX-3031">
    <property type="entry name" value="Laminin-421 complex"/>
</dbReference>
<dbReference type="FunCoup" id="P97927">
    <property type="interactions" value="543"/>
</dbReference>
<dbReference type="STRING" id="10090.ENSMUSP00000019992"/>
<dbReference type="GlyConnect" id="2457">
    <property type="glycosylation" value="3 N-Linked glycans (3 sites)"/>
</dbReference>
<dbReference type="GlyCosmos" id="P97927">
    <property type="glycosylation" value="18 sites, 3 glycans"/>
</dbReference>
<dbReference type="GlyGen" id="P97927">
    <property type="glycosylation" value="21 sites, 12 N-linked glycans (10 sites), 1 O-linked glycan (1 site)"/>
</dbReference>
<dbReference type="iPTMnet" id="P97927"/>
<dbReference type="PhosphoSitePlus" id="P97927"/>
<dbReference type="jPOST" id="P97927"/>
<dbReference type="PaxDb" id="10090-ENSMUSP00000019992"/>
<dbReference type="PeptideAtlas" id="P97927"/>
<dbReference type="ProteomicsDB" id="265035"/>
<dbReference type="Pumba" id="P97927"/>
<dbReference type="Antibodypedia" id="2846">
    <property type="antibodies" value="366 antibodies from 29 providers"/>
</dbReference>
<dbReference type="DNASU" id="16775"/>
<dbReference type="Ensembl" id="ENSMUST00000019992.6">
    <property type="protein sequence ID" value="ENSMUSP00000019992.6"/>
    <property type="gene ID" value="ENSMUSG00000019846.12"/>
</dbReference>
<dbReference type="GeneID" id="16775"/>
<dbReference type="KEGG" id="mmu:16775"/>
<dbReference type="UCSC" id="uc007evq.2">
    <property type="organism name" value="mouse"/>
</dbReference>
<dbReference type="AGR" id="MGI:109321"/>
<dbReference type="CTD" id="3910"/>
<dbReference type="MGI" id="MGI:109321">
    <property type="gene designation" value="Lama4"/>
</dbReference>
<dbReference type="VEuPathDB" id="HostDB:ENSMUSG00000019846"/>
<dbReference type="eggNOG" id="KOG1836">
    <property type="taxonomic scope" value="Eukaryota"/>
</dbReference>
<dbReference type="GeneTree" id="ENSGT00940000159970"/>
<dbReference type="HOGENOM" id="CLU_002814_0_0_1"/>
<dbReference type="InParanoid" id="P97927"/>
<dbReference type="OMA" id="CLGEPPM"/>
<dbReference type="OrthoDB" id="30373at9989"/>
<dbReference type="PhylomeDB" id="P97927"/>
<dbReference type="TreeFam" id="TF335359"/>
<dbReference type="Reactome" id="R-MMU-3000157">
    <property type="pathway name" value="Laminin interactions"/>
</dbReference>
<dbReference type="Reactome" id="R-MMU-8874081">
    <property type="pathway name" value="MET activates PTK2 signaling"/>
</dbReference>
<dbReference type="Reactome" id="R-MMU-9913351">
    <property type="pathway name" value="Formation of the dystrophin-glycoprotein complex (DGC)"/>
</dbReference>
<dbReference type="BioGRID-ORCS" id="16775">
    <property type="hits" value="3 hits in 79 CRISPR screens"/>
</dbReference>
<dbReference type="ChiTaRS" id="Lama4">
    <property type="organism name" value="mouse"/>
</dbReference>
<dbReference type="PRO" id="PR:P97927"/>
<dbReference type="Proteomes" id="UP000000589">
    <property type="component" value="Chromosome 10"/>
</dbReference>
<dbReference type="RNAct" id="P97927">
    <property type="molecule type" value="protein"/>
</dbReference>
<dbReference type="Bgee" id="ENSMUSG00000019846">
    <property type="expression patterns" value="Expressed in external carotid artery and 204 other cell types or tissues"/>
</dbReference>
<dbReference type="GO" id="GO:0005604">
    <property type="term" value="C:basement membrane"/>
    <property type="evidence" value="ECO:0000314"/>
    <property type="project" value="MGI"/>
</dbReference>
<dbReference type="GO" id="GO:0062023">
    <property type="term" value="C:collagen-containing extracellular matrix"/>
    <property type="evidence" value="ECO:0007005"/>
    <property type="project" value="BHF-UCL"/>
</dbReference>
<dbReference type="GO" id="GO:0005576">
    <property type="term" value="C:extracellular region"/>
    <property type="evidence" value="ECO:0000304"/>
    <property type="project" value="Reactome"/>
</dbReference>
<dbReference type="GO" id="GO:0031594">
    <property type="term" value="C:neuromuscular junction"/>
    <property type="evidence" value="ECO:0000314"/>
    <property type="project" value="SynGO"/>
</dbReference>
<dbReference type="GO" id="GO:0043083">
    <property type="term" value="C:synaptic cleft"/>
    <property type="evidence" value="ECO:0000314"/>
    <property type="project" value="SynGO"/>
</dbReference>
<dbReference type="GO" id="GO:0005102">
    <property type="term" value="F:signaling receptor binding"/>
    <property type="evidence" value="ECO:0007669"/>
    <property type="project" value="InterPro"/>
</dbReference>
<dbReference type="GO" id="GO:0001568">
    <property type="term" value="P:blood vessel development"/>
    <property type="evidence" value="ECO:0000315"/>
    <property type="project" value="MGI"/>
</dbReference>
<dbReference type="GO" id="GO:0050873">
    <property type="term" value="P:brown fat cell differentiation"/>
    <property type="evidence" value="ECO:0000314"/>
    <property type="project" value="MGI"/>
</dbReference>
<dbReference type="GO" id="GO:0007155">
    <property type="term" value="P:cell adhesion"/>
    <property type="evidence" value="ECO:0007669"/>
    <property type="project" value="UniProtKB-KW"/>
</dbReference>
<dbReference type="GO" id="GO:0120163">
    <property type="term" value="P:negative regulation of cold-induced thermogenesis"/>
    <property type="evidence" value="ECO:0000315"/>
    <property type="project" value="YuBioLab"/>
</dbReference>
<dbReference type="GO" id="GO:0030155">
    <property type="term" value="P:regulation of cell adhesion"/>
    <property type="evidence" value="ECO:0007669"/>
    <property type="project" value="InterPro"/>
</dbReference>
<dbReference type="GO" id="GO:0030334">
    <property type="term" value="P:regulation of cell migration"/>
    <property type="evidence" value="ECO:0007669"/>
    <property type="project" value="InterPro"/>
</dbReference>
<dbReference type="GO" id="GO:0045995">
    <property type="term" value="P:regulation of embryonic development"/>
    <property type="evidence" value="ECO:0007669"/>
    <property type="project" value="InterPro"/>
</dbReference>
<dbReference type="CDD" id="cd00055">
    <property type="entry name" value="EGF_Lam"/>
    <property type="match status" value="3"/>
</dbReference>
<dbReference type="CDD" id="cd00110">
    <property type="entry name" value="LamG"/>
    <property type="match status" value="5"/>
</dbReference>
<dbReference type="FunFam" id="2.10.25.10:FF:000051">
    <property type="entry name" value="Laminin subunit alpha 4"/>
    <property type="match status" value="1"/>
</dbReference>
<dbReference type="FunFam" id="2.10.25.10:FF:000491">
    <property type="entry name" value="Laminin subunit alpha 4"/>
    <property type="match status" value="1"/>
</dbReference>
<dbReference type="FunFam" id="2.10.25.10:FF:000569">
    <property type="entry name" value="Laminin subunit alpha 4"/>
    <property type="match status" value="1"/>
</dbReference>
<dbReference type="FunFam" id="2.60.120.200:FF:000053">
    <property type="entry name" value="Laminin subunit alpha 4"/>
    <property type="match status" value="1"/>
</dbReference>
<dbReference type="FunFam" id="2.60.120.200:FF:000058">
    <property type="entry name" value="Laminin subunit alpha 4"/>
    <property type="match status" value="1"/>
</dbReference>
<dbReference type="FunFam" id="2.60.120.200:FF:000064">
    <property type="entry name" value="Laminin subunit alpha 4"/>
    <property type="match status" value="1"/>
</dbReference>
<dbReference type="FunFam" id="2.60.120.200:FF:000066">
    <property type="entry name" value="Laminin subunit alpha 4"/>
    <property type="match status" value="1"/>
</dbReference>
<dbReference type="FunFam" id="2.60.120.200:FF:000087">
    <property type="entry name" value="Laminin subunit alpha 4"/>
    <property type="match status" value="1"/>
</dbReference>
<dbReference type="Gene3D" id="2.60.120.200">
    <property type="match status" value="5"/>
</dbReference>
<dbReference type="Gene3D" id="2.10.25.10">
    <property type="entry name" value="Laminin"/>
    <property type="match status" value="3"/>
</dbReference>
<dbReference type="InterPro" id="IPR013320">
    <property type="entry name" value="ConA-like_dom_sf"/>
</dbReference>
<dbReference type="InterPro" id="IPR000742">
    <property type="entry name" value="EGF-like_dom"/>
</dbReference>
<dbReference type="InterPro" id="IPR009254">
    <property type="entry name" value="Laminin_aI"/>
</dbReference>
<dbReference type="InterPro" id="IPR010307">
    <property type="entry name" value="Laminin_dom_II"/>
</dbReference>
<dbReference type="InterPro" id="IPR001791">
    <property type="entry name" value="Laminin_G"/>
</dbReference>
<dbReference type="InterPro" id="IPR002049">
    <property type="entry name" value="LE_dom"/>
</dbReference>
<dbReference type="InterPro" id="IPR056863">
    <property type="entry name" value="LMN_ATRN_NET-like_EGF"/>
</dbReference>
<dbReference type="InterPro" id="IPR050372">
    <property type="entry name" value="Neurexin-related_CASP"/>
</dbReference>
<dbReference type="PANTHER" id="PTHR15036:SF47">
    <property type="entry name" value="LAMININ SUBUNIT ALPHA-4"/>
    <property type="match status" value="1"/>
</dbReference>
<dbReference type="PANTHER" id="PTHR15036">
    <property type="entry name" value="PIKACHURIN-LIKE PROTEIN"/>
    <property type="match status" value="1"/>
</dbReference>
<dbReference type="Pfam" id="PF00053">
    <property type="entry name" value="EGF_laminin"/>
    <property type="match status" value="2"/>
</dbReference>
<dbReference type="Pfam" id="PF24973">
    <property type="entry name" value="EGF_LMN_ATRN"/>
    <property type="match status" value="1"/>
</dbReference>
<dbReference type="Pfam" id="PF02210">
    <property type="entry name" value="Laminin_G_2"/>
    <property type="match status" value="5"/>
</dbReference>
<dbReference type="Pfam" id="PF06008">
    <property type="entry name" value="Laminin_I"/>
    <property type="match status" value="1"/>
</dbReference>
<dbReference type="Pfam" id="PF06009">
    <property type="entry name" value="Laminin_II"/>
    <property type="match status" value="1"/>
</dbReference>
<dbReference type="SMART" id="SM00181">
    <property type="entry name" value="EGF"/>
    <property type="match status" value="3"/>
</dbReference>
<dbReference type="SMART" id="SM00180">
    <property type="entry name" value="EGF_Lam"/>
    <property type="match status" value="3"/>
</dbReference>
<dbReference type="SMART" id="SM00282">
    <property type="entry name" value="LamG"/>
    <property type="match status" value="5"/>
</dbReference>
<dbReference type="SUPFAM" id="SSF49899">
    <property type="entry name" value="Concanavalin A-like lectins/glucanases"/>
    <property type="match status" value="5"/>
</dbReference>
<dbReference type="SUPFAM" id="SSF57196">
    <property type="entry name" value="EGF/Laminin"/>
    <property type="match status" value="2"/>
</dbReference>
<dbReference type="PROSITE" id="PS00022">
    <property type="entry name" value="EGF_1"/>
    <property type="match status" value="1"/>
</dbReference>
<dbReference type="PROSITE" id="PS01248">
    <property type="entry name" value="EGF_LAM_1"/>
    <property type="match status" value="3"/>
</dbReference>
<dbReference type="PROSITE" id="PS50027">
    <property type="entry name" value="EGF_LAM_2"/>
    <property type="match status" value="3"/>
</dbReference>
<dbReference type="PROSITE" id="PS50025">
    <property type="entry name" value="LAM_G_DOMAIN"/>
    <property type="match status" value="5"/>
</dbReference>
<name>LAMA4_MOUSE</name>
<gene>
    <name type="primary">Lama4</name>
</gene>
<reference key="1">
    <citation type="journal article" date="1997" name="Eur. J. Biochem.">
        <title>Cloning of the mouse laminin alpha 4 cDNA. Expression in a subset of endothelium.</title>
        <authorList>
            <person name="Frieser M."/>
            <person name="Noeckel H."/>
            <person name="Pausch F."/>
            <person name="Roeder C."/>
            <person name="Hahn A."/>
            <person name="Deutzmann R."/>
            <person name="Sorokin L.M."/>
        </authorList>
    </citation>
    <scope>NUCLEOTIDE SEQUENCE [MRNA]</scope>
    <scope>PROTEIN SEQUENCE OF 462-469; 478-483; 776-782 AND 940-945</scope>
    <source>
        <strain>BALB/cJ</strain>
        <tissue>Endothelial cell</tissue>
    </source>
</reference>
<reference key="2">
    <citation type="journal article" date="1996" name="Matrix Biol.">
        <title>The complete cDNA coding sequence and tissue-specific expression of the mouse laminin alpha 4 chain.</title>
        <authorList>
            <person name="Liu J."/>
            <person name="Mayne R."/>
        </authorList>
    </citation>
    <scope>NUCLEOTIDE SEQUENCE [MRNA]</scope>
    <source>
        <tissue>Heart</tissue>
    </source>
</reference>
<reference key="3">
    <citation type="journal article" date="1997" name="J. Biol. Chem.">
        <title>Primary structure, developmental expression, and immunolocalization of the murine laminin alpha4 chain.</title>
        <authorList>
            <person name="Iivanainen A."/>
            <person name="Kortesmaa J."/>
            <person name="Sahlberg C."/>
            <person name="Morita T."/>
            <person name="Bergmann U."/>
            <person name="Thesleff I."/>
            <person name="Tryggvason K."/>
        </authorList>
    </citation>
    <scope>NUCLEOTIDE SEQUENCE [MRNA]</scope>
    <source>
        <strain>BALB/cJ</strain>
    </source>
</reference>
<reference key="4">
    <citation type="journal article" date="2004" name="Genome Res.">
        <title>The status, quality, and expansion of the NIH full-length cDNA project: the Mammalian Gene Collection (MGC).</title>
        <authorList>
            <consortium name="The MGC Project Team"/>
        </authorList>
    </citation>
    <scope>NUCLEOTIDE SEQUENCE [LARGE SCALE MRNA]</scope>
</reference>
<reference key="5">
    <citation type="journal article" date="1997" name="J. Cell Biol.">
        <title>The laminin alpha chains: expression, developmental transitions, and chromosomal locations of alpha1-5, identification of heterotrimeric laminins 8-11, and cloning of a novel alpha3 isoform.</title>
        <authorList>
            <person name="Miner J.H."/>
            <person name="Patton B.L."/>
            <person name="Lentz S.I."/>
            <person name="Gilbert D.J."/>
            <person name="Snider W.D."/>
            <person name="Jenkins N.A."/>
            <person name="Copeland N.G."/>
            <person name="Sanes J.R."/>
        </authorList>
    </citation>
    <scope>NUCLEOTIDE SEQUENCE [MRNA] OF 836-1106</scope>
    <source>
        <strain>ICR</strain>
        <tissue>Placenta</tissue>
    </source>
</reference>
<reference key="6">
    <citation type="journal article" date="1997" name="J. Comp. Neurol.">
        <title>Distribution of the ten known laminin chains in the pathways and targets of developing sensory axons.</title>
        <authorList>
            <person name="Lentz S.I."/>
            <person name="Miner J.H."/>
            <person name="Sanes J.R."/>
            <person name="Snider W.D."/>
        </authorList>
    </citation>
    <scope>NUCLEOTIDE SEQUENCE [MRNA] OF 1467-1691</scope>
    <source>
        <tissue>Placenta</tissue>
    </source>
</reference>
<reference key="7">
    <citation type="journal article" date="2010" name="Cell">
        <title>A tissue-specific atlas of mouse protein phosphorylation and expression.</title>
        <authorList>
            <person name="Huttlin E.L."/>
            <person name="Jedrychowski M.P."/>
            <person name="Elias J.E."/>
            <person name="Goswami T."/>
            <person name="Rad R."/>
            <person name="Beausoleil S.A."/>
            <person name="Villen J."/>
            <person name="Haas W."/>
            <person name="Sowa M.E."/>
            <person name="Gygi S.P."/>
        </authorList>
    </citation>
    <scope>IDENTIFICATION BY MASS SPECTROMETRY [LARGE SCALE ANALYSIS]</scope>
    <source>
        <tissue>Brown adipose tissue</tissue>
        <tissue>Heart</tissue>
        <tissue>Kidney</tissue>
        <tissue>Lung</tissue>
        <tissue>Pancreas</tissue>
        <tissue>Testis</tissue>
    </source>
</reference>
<organism>
    <name type="scientific">Mus musculus</name>
    <name type="common">Mouse</name>
    <dbReference type="NCBI Taxonomy" id="10090"/>
    <lineage>
        <taxon>Eukaryota</taxon>
        <taxon>Metazoa</taxon>
        <taxon>Chordata</taxon>
        <taxon>Craniata</taxon>
        <taxon>Vertebrata</taxon>
        <taxon>Euteleostomi</taxon>
        <taxon>Mammalia</taxon>
        <taxon>Eutheria</taxon>
        <taxon>Euarchontoglires</taxon>
        <taxon>Glires</taxon>
        <taxon>Rodentia</taxon>
        <taxon>Myomorpha</taxon>
        <taxon>Muroidea</taxon>
        <taxon>Muridae</taxon>
        <taxon>Murinae</taxon>
        <taxon>Mus</taxon>
        <taxon>Mus</taxon>
    </lineage>
</organism>